<gene>
    <name type="primary">FBXL14</name>
    <name type="synonym">FBL14</name>
</gene>
<evidence type="ECO:0000250" key="1"/>
<evidence type="ECO:0000269" key="2">
    <source>
    </source>
</evidence>
<keyword id="KW-0963">Cytoplasm</keyword>
<keyword id="KW-0433">Leucine-rich repeat</keyword>
<keyword id="KW-1267">Proteomics identification</keyword>
<keyword id="KW-1185">Reference proteome</keyword>
<keyword id="KW-0677">Repeat</keyword>
<keyword id="KW-0833">Ubl conjugation pathway</keyword>
<organism>
    <name type="scientific">Homo sapiens</name>
    <name type="common">Human</name>
    <dbReference type="NCBI Taxonomy" id="9606"/>
    <lineage>
        <taxon>Eukaryota</taxon>
        <taxon>Metazoa</taxon>
        <taxon>Chordata</taxon>
        <taxon>Craniata</taxon>
        <taxon>Vertebrata</taxon>
        <taxon>Euteleostomi</taxon>
        <taxon>Mammalia</taxon>
        <taxon>Eutheria</taxon>
        <taxon>Euarchontoglires</taxon>
        <taxon>Primates</taxon>
        <taxon>Haplorrhini</taxon>
        <taxon>Catarrhini</taxon>
        <taxon>Hominidae</taxon>
        <taxon>Homo</taxon>
    </lineage>
</organism>
<proteinExistence type="evidence at protein level"/>
<sequence length="418" mass="45886">METHISCLFPELLAMIFGYLDVRDKGRAAQVCTAWRDAAYHKSVWRGVEAKLHLRRANPSLFPSLQARGIRRVQILSLRRSLSYVIQGMANIESLNLSGCYNLTDNGLGHAFVQEIGSLRALNLSLCKQITDSSLGRIAQYLKGLEVLELGGCSNITNTGLLLIAWGLQRLKSLNLRSCRHLSDVGIGHLAGMTRSAAEGCLGLEQLTLQDCQKLTDLSLKHISRGLTGLRLLNLSFCGGISDAGLLHLSHMGSLRSLNLRSCDNISDTGIMHLAMGSLRLSGLDVSFCDKVGDQSLAYIAQGLDGLKSLSLCSCHISDDGINRMVRQMHGLRTLNIGQCVRITDKGLELIAEHLSQLTGIDLYGCTRITKRGLERITQLPCLKVLNLGLWQMTDSEKEARGDFSPLFTVRTRGSSRR</sequence>
<accession>Q8N1E6</accession>
<reference key="1">
    <citation type="journal article" date="2004" name="Genome Res.">
        <title>The status, quality, and expansion of the NIH full-length cDNA project: the Mammalian Gene Collection (MGC).</title>
        <authorList>
            <consortium name="The MGC Project Team"/>
        </authorList>
    </citation>
    <scope>NUCLEOTIDE SEQUENCE [LARGE SCALE MRNA]</scope>
    <source>
        <tissue>Lung</tissue>
    </source>
</reference>
<reference key="2">
    <citation type="journal article" date="2010" name="J. Biol. Chem.">
        <title>The hypoxia-controlled FBXL14 ubiquitin ligase targets SNAIL1 for proteasome degradation.</title>
        <authorList>
            <person name="Vinas-Castells R."/>
            <person name="Beltran M."/>
            <person name="Valls G."/>
            <person name="Gomez I."/>
            <person name="Garcia J.M."/>
            <person name="Montserrat-Sentis B."/>
            <person name="Baulida J."/>
            <person name="Bonilla F."/>
            <person name="de Herreros A.G."/>
            <person name="Diaz V.M."/>
        </authorList>
    </citation>
    <scope>FUNCTION</scope>
    <scope>INTERACTION WITH SNAI1</scope>
    <scope>SUBCELLULAR LOCATION</scope>
    <scope>INDUCTION BY HYPOXIA</scope>
</reference>
<comment type="function">
    <text evidence="2">Substrate-recognition component of some SCF (SKP1-CUL1-F-box protein)-type E3 ubiquitin-protein ligase complexes. The SCF(FBXL14) complex acts by mediating ubiquitination and subsequent degradation of SNAI1.</text>
</comment>
<comment type="subunit">
    <text evidence="1 2">Part of a SCF (SKP1-cullin-F-box) ubiquitin-protein ligase complex. Interacts with SKP1 and CUL1 (By similarity). Interacts with SNAI1; the interaction requires the phosphorylation of the two serine residues in the substrate destruction motif D-S-G-X(2,3,4)-S.</text>
</comment>
<comment type="interaction">
    <interactant intactId="EBI-6425532">
        <id>Q8N1E6</id>
    </interactant>
    <interactant intactId="EBI-307486">
        <id>P63208</id>
        <label>SKP1</label>
    </interactant>
    <organismsDiffer>false</organismsDiffer>
    <experiments>6</experiments>
</comment>
<comment type="interaction">
    <interactant intactId="EBI-6425532">
        <id>Q8N1E6</id>
    </interactant>
    <interactant intactId="EBI-1045459">
        <id>O95863</id>
        <label>SNAI1</label>
    </interactant>
    <organismsDiffer>false</organismsDiffer>
    <experiments>2</experiments>
</comment>
<comment type="subcellular location">
    <subcellularLocation>
        <location evidence="2">Cytoplasm</location>
    </subcellularLocation>
</comment>
<comment type="induction">
    <text evidence="2">Down-regulated by hypoxia.</text>
</comment>
<feature type="chain" id="PRO_0000119861" description="F-box/LRR-repeat protein 14">
    <location>
        <begin position="1"/>
        <end position="418"/>
    </location>
</feature>
<feature type="domain" description="F-box">
    <location>
        <begin position="2"/>
        <end position="48"/>
    </location>
</feature>
<feature type="repeat" description="LRR 1">
    <location>
        <begin position="144"/>
        <end position="163"/>
    </location>
</feature>
<feature type="repeat" description="LRR 2">
    <location>
        <begin position="170"/>
        <end position="191"/>
    </location>
</feature>
<feature type="repeat" description="LRR 3">
    <location>
        <begin position="203"/>
        <end position="225"/>
    </location>
</feature>
<feature type="repeat" description="LRR 4">
    <location>
        <begin position="229"/>
        <end position="250"/>
    </location>
</feature>
<feature type="repeat" description="LRR 5">
    <location>
        <begin position="254"/>
        <end position="275"/>
    </location>
</feature>
<feature type="region of interest" description="Required for down-regulation of SNAI1">
    <location>
        <begin position="2"/>
        <end position="48"/>
    </location>
</feature>
<feature type="sequence variant" id="VAR_049033" description="In dbSNP:rs35571553.">
    <original>L</original>
    <variation>V</variation>
    <location>
        <position position="220"/>
    </location>
</feature>
<protein>
    <recommendedName>
        <fullName>F-box/LRR-repeat protein 14</fullName>
    </recommendedName>
    <alternativeName>
        <fullName>F-box and leucine-rich repeat protein 14</fullName>
    </alternativeName>
</protein>
<name>FXL14_HUMAN</name>
<dbReference type="EMBL" id="BC028132">
    <property type="protein sequence ID" value="AAH28132.1"/>
    <property type="molecule type" value="mRNA"/>
</dbReference>
<dbReference type="CCDS" id="CCDS8509.1"/>
<dbReference type="RefSeq" id="NP_689654.1">
    <property type="nucleotide sequence ID" value="NM_152441.3"/>
</dbReference>
<dbReference type="SMR" id="Q8N1E6"/>
<dbReference type="BioGRID" id="126870">
    <property type="interactions" value="38"/>
</dbReference>
<dbReference type="ComplexPortal" id="CPX-2319">
    <property type="entry name" value="SCF E3 ubiquitin ligase complex, FBXL14 variant"/>
</dbReference>
<dbReference type="FunCoup" id="Q8N1E6">
    <property type="interactions" value="655"/>
</dbReference>
<dbReference type="IntAct" id="Q8N1E6">
    <property type="interactions" value="35"/>
</dbReference>
<dbReference type="MINT" id="Q8N1E6"/>
<dbReference type="STRING" id="9606.ENSP00000344855"/>
<dbReference type="GlyGen" id="Q8N1E6">
    <property type="glycosylation" value="1 site, 1 O-linked glycan (1 site)"/>
</dbReference>
<dbReference type="iPTMnet" id="Q8N1E6"/>
<dbReference type="PhosphoSitePlus" id="Q8N1E6"/>
<dbReference type="BioMuta" id="FBXL14"/>
<dbReference type="DMDM" id="48428083"/>
<dbReference type="jPOST" id="Q8N1E6"/>
<dbReference type="MassIVE" id="Q8N1E6"/>
<dbReference type="PaxDb" id="9606-ENSP00000344855"/>
<dbReference type="PeptideAtlas" id="Q8N1E6"/>
<dbReference type="ProteomicsDB" id="71590"/>
<dbReference type="Pumba" id="Q8N1E6"/>
<dbReference type="Antibodypedia" id="41744">
    <property type="antibodies" value="107 antibodies from 23 providers"/>
</dbReference>
<dbReference type="DNASU" id="144699"/>
<dbReference type="Ensembl" id="ENST00000339235.4">
    <property type="protein sequence ID" value="ENSP00000344855.3"/>
    <property type="gene ID" value="ENSG00000171823.7"/>
</dbReference>
<dbReference type="GeneID" id="144699"/>
<dbReference type="KEGG" id="hsa:144699"/>
<dbReference type="MANE-Select" id="ENST00000339235.4">
    <property type="protein sequence ID" value="ENSP00000344855.3"/>
    <property type="RefSeq nucleotide sequence ID" value="NM_152441.3"/>
    <property type="RefSeq protein sequence ID" value="NP_689654.1"/>
</dbReference>
<dbReference type="UCSC" id="uc001qjh.3">
    <property type="organism name" value="human"/>
</dbReference>
<dbReference type="AGR" id="HGNC:28624"/>
<dbReference type="CTD" id="144699"/>
<dbReference type="DisGeNET" id="144699"/>
<dbReference type="GeneCards" id="FBXL14"/>
<dbReference type="HGNC" id="HGNC:28624">
    <property type="gene designation" value="FBXL14"/>
</dbReference>
<dbReference type="HPA" id="ENSG00000171823">
    <property type="expression patterns" value="Low tissue specificity"/>
</dbReference>
<dbReference type="MIM" id="609081">
    <property type="type" value="gene"/>
</dbReference>
<dbReference type="neXtProt" id="NX_Q8N1E6"/>
<dbReference type="OpenTargets" id="ENSG00000171823"/>
<dbReference type="PharmGKB" id="PA134979350"/>
<dbReference type="VEuPathDB" id="HostDB:ENSG00000171823"/>
<dbReference type="eggNOG" id="KOG1947">
    <property type="taxonomic scope" value="Eukaryota"/>
</dbReference>
<dbReference type="GeneTree" id="ENSGT00940000159857"/>
<dbReference type="HOGENOM" id="CLU_016072_7_0_1"/>
<dbReference type="InParanoid" id="Q8N1E6"/>
<dbReference type="OMA" id="DQALVHI"/>
<dbReference type="OrthoDB" id="2585512at2759"/>
<dbReference type="PAN-GO" id="Q8N1E6">
    <property type="GO annotations" value="2 GO annotations based on evolutionary models"/>
</dbReference>
<dbReference type="PhylomeDB" id="Q8N1E6"/>
<dbReference type="TreeFam" id="TF313434"/>
<dbReference type="PathwayCommons" id="Q8N1E6"/>
<dbReference type="Reactome" id="R-HSA-8951664">
    <property type="pathway name" value="Neddylation"/>
</dbReference>
<dbReference type="Reactome" id="R-HSA-983168">
    <property type="pathway name" value="Antigen processing: Ubiquitination &amp; Proteasome degradation"/>
</dbReference>
<dbReference type="SignaLink" id="Q8N1E6"/>
<dbReference type="SIGNOR" id="Q8N1E6"/>
<dbReference type="BioGRID-ORCS" id="144699">
    <property type="hits" value="15 hits in 1194 CRISPR screens"/>
</dbReference>
<dbReference type="ChiTaRS" id="FBXL14">
    <property type="organism name" value="human"/>
</dbReference>
<dbReference type="GenomeRNAi" id="144699"/>
<dbReference type="Pharos" id="Q8N1E6">
    <property type="development level" value="Tbio"/>
</dbReference>
<dbReference type="PRO" id="PR:Q8N1E6"/>
<dbReference type="Proteomes" id="UP000005640">
    <property type="component" value="Chromosome 12"/>
</dbReference>
<dbReference type="RNAct" id="Q8N1E6">
    <property type="molecule type" value="protein"/>
</dbReference>
<dbReference type="Bgee" id="ENSG00000171823">
    <property type="expression patterns" value="Expressed in left testis and 114 other cell types or tissues"/>
</dbReference>
<dbReference type="GO" id="GO:0005737">
    <property type="term" value="C:cytoplasm"/>
    <property type="evidence" value="ECO:0000314"/>
    <property type="project" value="UniProtKB"/>
</dbReference>
<dbReference type="GO" id="GO:0005829">
    <property type="term" value="C:cytosol"/>
    <property type="evidence" value="ECO:0000304"/>
    <property type="project" value="Reactome"/>
</dbReference>
<dbReference type="GO" id="GO:0019005">
    <property type="term" value="C:SCF ubiquitin ligase complex"/>
    <property type="evidence" value="ECO:0000318"/>
    <property type="project" value="GO_Central"/>
</dbReference>
<dbReference type="GO" id="GO:0004842">
    <property type="term" value="F:ubiquitin-protein transferase activity"/>
    <property type="evidence" value="ECO:0000314"/>
    <property type="project" value="UniProtKB"/>
</dbReference>
<dbReference type="GO" id="GO:0031146">
    <property type="term" value="P:SCF-dependent proteasomal ubiquitin-dependent protein catabolic process"/>
    <property type="evidence" value="ECO:0000318"/>
    <property type="project" value="GO_Central"/>
</dbReference>
<dbReference type="GO" id="GO:0006511">
    <property type="term" value="P:ubiquitin-dependent protein catabolic process"/>
    <property type="evidence" value="ECO:0000314"/>
    <property type="project" value="UniProtKB"/>
</dbReference>
<dbReference type="CDD" id="cd22125">
    <property type="entry name" value="F-box_FBXL14"/>
    <property type="match status" value="1"/>
</dbReference>
<dbReference type="FunFam" id="3.80.10.10:FF:000051">
    <property type="entry name" value="F-box and leucine-rich repeat protein 14"/>
    <property type="match status" value="1"/>
</dbReference>
<dbReference type="FunFam" id="3.80.10.10:FF:000075">
    <property type="entry name" value="F-box/LRR-repeat protein 14 isoform X1"/>
    <property type="match status" value="1"/>
</dbReference>
<dbReference type="FunFam" id="1.20.1280.50:FF:000059">
    <property type="entry name" value="Partner of Paired"/>
    <property type="match status" value="1"/>
</dbReference>
<dbReference type="Gene3D" id="3.80.10.10">
    <property type="entry name" value="Ribonuclease Inhibitor"/>
    <property type="match status" value="2"/>
</dbReference>
<dbReference type="InterPro" id="IPR036047">
    <property type="entry name" value="F-box-like_dom_sf"/>
</dbReference>
<dbReference type="InterPro" id="IPR001810">
    <property type="entry name" value="F-box_dom"/>
</dbReference>
<dbReference type="InterPro" id="IPR047932">
    <property type="entry name" value="FBXL14_F-box"/>
</dbReference>
<dbReference type="InterPro" id="IPR001611">
    <property type="entry name" value="Leu-rich_rpt"/>
</dbReference>
<dbReference type="InterPro" id="IPR006553">
    <property type="entry name" value="Leu-rich_rpt_Cys-con_subtyp"/>
</dbReference>
<dbReference type="InterPro" id="IPR032675">
    <property type="entry name" value="LRR_dom_sf"/>
</dbReference>
<dbReference type="PANTHER" id="PTHR13318">
    <property type="entry name" value="PARTNER OF PAIRED, ISOFORM B-RELATED"/>
    <property type="match status" value="1"/>
</dbReference>
<dbReference type="Pfam" id="PF12937">
    <property type="entry name" value="F-box-like"/>
    <property type="match status" value="1"/>
</dbReference>
<dbReference type="Pfam" id="PF13516">
    <property type="entry name" value="LRR_6"/>
    <property type="match status" value="4"/>
</dbReference>
<dbReference type="SMART" id="SM00367">
    <property type="entry name" value="LRR_CC"/>
    <property type="match status" value="11"/>
</dbReference>
<dbReference type="SUPFAM" id="SSF81383">
    <property type="entry name" value="F-box domain"/>
    <property type="match status" value="1"/>
</dbReference>
<dbReference type="SUPFAM" id="SSF52047">
    <property type="entry name" value="RNI-like"/>
    <property type="match status" value="1"/>
</dbReference>